<reference key="1">
    <citation type="journal article" date="1992" name="J. Bacteriol.">
        <title>Identification of pilR, which encodes a transcriptional activator of the Pseudomonas aeruginosa pilin gene.</title>
        <authorList>
            <person name="Ishimoto K.S."/>
            <person name="Lory S."/>
        </authorList>
    </citation>
    <scope>NUCLEOTIDE SEQUENCE [GENOMIC DNA]</scope>
    <source>
        <strain>PAK</strain>
    </source>
</reference>
<reference key="2">
    <citation type="journal article" date="1993" name="Mol. Microbiol.">
        <title>PilS and PilR, a two-component transcriptional regulatory system controlling expression of type 4 fimbriae in Pseudomonas aeruginosa.</title>
        <authorList>
            <person name="Hobbs M."/>
            <person name="Collie E.S.R."/>
            <person name="Free P.D."/>
            <person name="Livingston S.P."/>
            <person name="Mattick J.S."/>
        </authorList>
    </citation>
    <scope>NUCLEOTIDE SEQUENCE [GENOMIC DNA]</scope>
    <scope>FUNCTION</scope>
    <source>
        <strain>ATCC 15692 / DSM 22644 / CIP 104116 / JCM 14847 / LMG 12228 / 1C / PRS 101 / PAO1</strain>
    </source>
</reference>
<reference key="3">
    <citation type="journal article" date="1994" name="Mol. Gen. Genet.">
        <title>Identification and characterization of PilS, an essential regulator of pilin expression in Pseudomonas aeruginosa.</title>
        <authorList>
            <person name="Boyd J.M."/>
            <person name="Koga T."/>
            <person name="Lory S."/>
        </authorList>
    </citation>
    <scope>NUCLEOTIDE SEQUENCE [GENOMIC DNA]</scope>
    <scope>FUNCTION</scope>
    <source>
        <strain>PAK</strain>
    </source>
</reference>
<reference key="4">
    <citation type="journal article" date="2000" name="Nature">
        <title>Complete genome sequence of Pseudomonas aeruginosa PAO1, an opportunistic pathogen.</title>
        <authorList>
            <person name="Stover C.K."/>
            <person name="Pham X.-Q.T."/>
            <person name="Erwin A.L."/>
            <person name="Mizoguchi S.D."/>
            <person name="Warrener P."/>
            <person name="Hickey M.J."/>
            <person name="Brinkman F.S.L."/>
            <person name="Hufnagle W.O."/>
            <person name="Kowalik D.J."/>
            <person name="Lagrou M."/>
            <person name="Garber R.L."/>
            <person name="Goltry L."/>
            <person name="Tolentino E."/>
            <person name="Westbrock-Wadman S."/>
            <person name="Yuan Y."/>
            <person name="Brody L.L."/>
            <person name="Coulter S.N."/>
            <person name="Folger K.R."/>
            <person name="Kas A."/>
            <person name="Larbig K."/>
            <person name="Lim R.M."/>
            <person name="Smith K.A."/>
            <person name="Spencer D.H."/>
            <person name="Wong G.K.-S."/>
            <person name="Wu Z."/>
            <person name="Paulsen I.T."/>
            <person name="Reizer J."/>
            <person name="Saier M.H. Jr."/>
            <person name="Hancock R.E.W."/>
            <person name="Lory S."/>
            <person name="Olson M.V."/>
        </authorList>
    </citation>
    <scope>NUCLEOTIDE SEQUENCE [LARGE SCALE GENOMIC DNA]</scope>
    <source>
        <strain>ATCC 15692 / DSM 22644 / CIP 104116 / JCM 14847 / LMG 12228 / 1C / PRS 101 / PAO1</strain>
    </source>
</reference>
<reference key="5">
    <citation type="journal article" date="1994" name="Mol. Microbiol.">
        <title>PilR, a transcriptional regulator of piliation in Pseudomonas aeruginosa, binds to a cis-acting sequence upstream of the pilin gene promoter.</title>
        <authorList>
            <person name="Jin S."/>
            <person name="Ishimoto K.S."/>
            <person name="Lory S."/>
        </authorList>
    </citation>
    <scope>FUNCTION</scope>
    <scope>DNA-BINDING</scope>
</reference>
<reference key="6">
    <citation type="journal article" date="2018" name="MBio">
        <title>The Pseudomonas aeruginosa PilSR Two-Component System Regulates Both Twitching and Swimming Motilities.</title>
        <authorList>
            <person name="Kilmury S.L.N."/>
            <person name="Burrows L.L."/>
        </authorList>
    </citation>
    <scope>FUNCTION</scope>
    <scope>DISRUPTION PHENOTYPE</scope>
    <source>
        <strain>PAK</strain>
    </source>
</reference>
<feature type="chain" id="PRO_0000081205" description="Response regulator protein PilR">
    <location>
        <begin position="1"/>
        <end position="445"/>
    </location>
</feature>
<feature type="domain" description="Response regulatory" evidence="2">
    <location>
        <begin position="5"/>
        <end position="119"/>
    </location>
</feature>
<feature type="domain" description="Sigma-54 factor interaction" evidence="3">
    <location>
        <begin position="135"/>
        <end position="364"/>
    </location>
</feature>
<feature type="DNA-binding region" description="H-T-H motif" evidence="1">
    <location>
        <begin position="418"/>
        <end position="437"/>
    </location>
</feature>
<feature type="binding site" evidence="3">
    <location>
        <begin position="163"/>
        <end position="170"/>
    </location>
    <ligand>
        <name>ATP</name>
        <dbReference type="ChEBI" id="CHEBI:30616"/>
    </ligand>
</feature>
<feature type="binding site" evidence="3">
    <location>
        <begin position="226"/>
        <end position="235"/>
    </location>
    <ligand>
        <name>ATP</name>
        <dbReference type="ChEBI" id="CHEBI:30616"/>
    </ligand>
</feature>
<feature type="modified residue" description="4-aspartylphosphate" evidence="2">
    <location>
        <position position="11"/>
    </location>
</feature>
<feature type="modified residue" description="4-aspartylphosphate" evidence="2">
    <location>
        <position position="54"/>
    </location>
</feature>
<feature type="sequence variant" description="In strain: PAK.">
    <original>LG</original>
    <variation>FDF</variation>
    <location>
        <begin position="108"/>
        <end position="109"/>
    </location>
</feature>
<feature type="sequence variant" description="In strain: PAK.">
    <original>V</original>
    <variation>L</variation>
    <location>
        <position position="269"/>
    </location>
</feature>
<feature type="sequence variant" description="In strain: PAK.">
    <original>R</original>
    <variation>G</variation>
    <location>
        <position position="353"/>
    </location>
</feature>
<keyword id="KW-0010">Activator</keyword>
<keyword id="KW-0067">ATP-binding</keyword>
<keyword id="KW-0963">Cytoplasm</keyword>
<keyword id="KW-0238">DNA-binding</keyword>
<keyword id="KW-0547">Nucleotide-binding</keyword>
<keyword id="KW-0597">Phosphoprotein</keyword>
<keyword id="KW-1185">Reference proteome</keyword>
<keyword id="KW-0804">Transcription</keyword>
<keyword id="KW-0805">Transcription regulation</keyword>
<keyword id="KW-0902">Two-component regulatory system</keyword>
<comment type="function">
    <text evidence="4 5 6 7 8">Member of the two-component regulatory system PilS/PilR that regulates the expression of multiple genes including the type IV pilus (T4P) major subunit PilA (PubMed:7911557, PubMed:8097014). Thereby, plays a major role in the regulation of multiple motility pathways (PubMed:30042200). Upon appropriate environmental signals, the histidine kinase PilS transfers the phosphoryl group onto PilR (PubMed:8097014). In turn, PilR functions as a transcriptional activator by direct binding to a cis-acting sequence upstream of the pilin gene promoter leading to its activation (PubMed:1317379, PubMed:7715443).</text>
</comment>
<comment type="subcellular location">
    <subcellularLocation>
        <location evidence="10">Cytoplasm</location>
    </subcellularLocation>
</comment>
<comment type="PTM">
    <text evidence="10">Phosphorylated by PilS.</text>
</comment>
<comment type="disruption phenotype">
    <text evidence="5">Deletion mutant results in changes in swimming, swarming and/or twitching motility associated with virulence in specific hosts.</text>
</comment>
<gene>
    <name type="primary">pilR</name>
    <name type="ordered locus">PA4547</name>
</gene>
<evidence type="ECO:0000250" key="1"/>
<evidence type="ECO:0000255" key="2">
    <source>
        <dbReference type="PROSITE-ProRule" id="PRU00169"/>
    </source>
</evidence>
<evidence type="ECO:0000255" key="3">
    <source>
        <dbReference type="PROSITE-ProRule" id="PRU00193"/>
    </source>
</evidence>
<evidence type="ECO:0000269" key="4">
    <source>
    </source>
</evidence>
<evidence type="ECO:0000269" key="5">
    <source>
    </source>
</evidence>
<evidence type="ECO:0000269" key="6">
    <source>
    </source>
</evidence>
<evidence type="ECO:0000269" key="7">
    <source>
    </source>
</evidence>
<evidence type="ECO:0000269" key="8">
    <source>
    </source>
</evidence>
<evidence type="ECO:0000303" key="9">
    <source>
    </source>
</evidence>
<evidence type="ECO:0000305" key="10"/>
<organism>
    <name type="scientific">Pseudomonas aeruginosa (strain ATCC 15692 / DSM 22644 / CIP 104116 / JCM 14847 / LMG 12228 / 1C / PRS 101 / PAO1)</name>
    <dbReference type="NCBI Taxonomy" id="208964"/>
    <lineage>
        <taxon>Bacteria</taxon>
        <taxon>Pseudomonadati</taxon>
        <taxon>Pseudomonadota</taxon>
        <taxon>Gammaproteobacteria</taxon>
        <taxon>Pseudomonadales</taxon>
        <taxon>Pseudomonadaceae</taxon>
        <taxon>Pseudomonas</taxon>
    </lineage>
</organism>
<protein>
    <recommendedName>
        <fullName evidence="9">Response regulator protein PilR</fullName>
    </recommendedName>
</protein>
<dbReference type="EMBL" id="M83311">
    <property type="protein sequence ID" value="AAA25956.1"/>
    <property type="molecule type" value="Genomic_DNA"/>
</dbReference>
<dbReference type="EMBL" id="Z12154">
    <property type="protein sequence ID" value="CAA78139.1"/>
    <property type="molecule type" value="Genomic_DNA"/>
</dbReference>
<dbReference type="EMBL" id="L22436">
    <property type="protein sequence ID" value="AAA20188.1"/>
    <property type="molecule type" value="Unassigned_DNA"/>
</dbReference>
<dbReference type="EMBL" id="AE004091">
    <property type="protein sequence ID" value="AAG07935.1"/>
    <property type="molecule type" value="Genomic_DNA"/>
</dbReference>
<dbReference type="PIR" id="A41896">
    <property type="entry name" value="A41896"/>
</dbReference>
<dbReference type="PIR" id="A83078">
    <property type="entry name" value="A83078"/>
</dbReference>
<dbReference type="RefSeq" id="NP_253237.1">
    <property type="nucleotide sequence ID" value="NC_002516.2"/>
</dbReference>
<dbReference type="RefSeq" id="WP_003094694.1">
    <property type="nucleotide sequence ID" value="NZ_QZGE01000004.1"/>
</dbReference>
<dbReference type="SMR" id="Q00934"/>
<dbReference type="FunCoup" id="Q00934">
    <property type="interactions" value="431"/>
</dbReference>
<dbReference type="STRING" id="208964.PA4547"/>
<dbReference type="PaxDb" id="208964-PA4547"/>
<dbReference type="GeneID" id="877622"/>
<dbReference type="KEGG" id="pae:PA4547"/>
<dbReference type="PATRIC" id="fig|208964.12.peg.4759"/>
<dbReference type="PseudoCAP" id="PA4547"/>
<dbReference type="HOGENOM" id="CLU_000445_0_6_6"/>
<dbReference type="InParanoid" id="Q00934"/>
<dbReference type="OrthoDB" id="9804019at2"/>
<dbReference type="PhylomeDB" id="Q00934"/>
<dbReference type="BioCyc" id="PAER208964:G1FZ6-4640-MONOMER"/>
<dbReference type="Proteomes" id="UP000002438">
    <property type="component" value="Chromosome"/>
</dbReference>
<dbReference type="GO" id="GO:0005737">
    <property type="term" value="C:cytoplasm"/>
    <property type="evidence" value="ECO:0007669"/>
    <property type="project" value="UniProtKB-SubCell"/>
</dbReference>
<dbReference type="GO" id="GO:0032993">
    <property type="term" value="C:protein-DNA complex"/>
    <property type="evidence" value="ECO:0000318"/>
    <property type="project" value="GO_Central"/>
</dbReference>
<dbReference type="GO" id="GO:0005524">
    <property type="term" value="F:ATP binding"/>
    <property type="evidence" value="ECO:0007669"/>
    <property type="project" value="UniProtKB-KW"/>
</dbReference>
<dbReference type="GO" id="GO:0016887">
    <property type="term" value="F:ATP hydrolysis activity"/>
    <property type="evidence" value="ECO:0007669"/>
    <property type="project" value="InterPro"/>
</dbReference>
<dbReference type="GO" id="GO:0000987">
    <property type="term" value="F:cis-regulatory region sequence-specific DNA binding"/>
    <property type="evidence" value="ECO:0000318"/>
    <property type="project" value="GO_Central"/>
</dbReference>
<dbReference type="GO" id="GO:0001216">
    <property type="term" value="F:DNA-binding transcription activator activity"/>
    <property type="evidence" value="ECO:0000318"/>
    <property type="project" value="GO_Central"/>
</dbReference>
<dbReference type="GO" id="GO:0000160">
    <property type="term" value="P:phosphorelay signal transduction system"/>
    <property type="evidence" value="ECO:0007669"/>
    <property type="project" value="UniProtKB-KW"/>
</dbReference>
<dbReference type="GO" id="GO:0045893">
    <property type="term" value="P:positive regulation of DNA-templated transcription"/>
    <property type="evidence" value="ECO:0000318"/>
    <property type="project" value="GO_Central"/>
</dbReference>
<dbReference type="GO" id="GO:0060491">
    <property type="term" value="P:regulation of cell projection assembly"/>
    <property type="evidence" value="ECO:0000315"/>
    <property type="project" value="PseudoCAP"/>
</dbReference>
<dbReference type="CDD" id="cd00009">
    <property type="entry name" value="AAA"/>
    <property type="match status" value="1"/>
</dbReference>
<dbReference type="CDD" id="cd19926">
    <property type="entry name" value="REC_PilR"/>
    <property type="match status" value="1"/>
</dbReference>
<dbReference type="FunFam" id="3.40.50.300:FF:000006">
    <property type="entry name" value="DNA-binding transcriptional regulator NtrC"/>
    <property type="match status" value="1"/>
</dbReference>
<dbReference type="FunFam" id="1.10.10.60:FF:000530">
    <property type="entry name" value="Sigma-54-dependent transcriptional response regulator PilR"/>
    <property type="match status" value="1"/>
</dbReference>
<dbReference type="FunFam" id="1.10.8.60:FF:000165">
    <property type="entry name" value="Sigma-54-dependent transcriptional response regulator PilR"/>
    <property type="match status" value="1"/>
</dbReference>
<dbReference type="FunFam" id="3.40.50.2300:FF:000374">
    <property type="entry name" value="Type 4 fimbriae expression regulatory protein pilR"/>
    <property type="match status" value="1"/>
</dbReference>
<dbReference type="Gene3D" id="1.10.8.60">
    <property type="match status" value="1"/>
</dbReference>
<dbReference type="Gene3D" id="3.40.50.2300">
    <property type="match status" value="1"/>
</dbReference>
<dbReference type="Gene3D" id="1.10.10.60">
    <property type="entry name" value="Homeodomain-like"/>
    <property type="match status" value="1"/>
</dbReference>
<dbReference type="Gene3D" id="3.40.50.300">
    <property type="entry name" value="P-loop containing nucleotide triphosphate hydrolases"/>
    <property type="match status" value="1"/>
</dbReference>
<dbReference type="InterPro" id="IPR003593">
    <property type="entry name" value="AAA+_ATPase"/>
</dbReference>
<dbReference type="InterPro" id="IPR011006">
    <property type="entry name" value="CheY-like_superfamily"/>
</dbReference>
<dbReference type="InterPro" id="IPR009057">
    <property type="entry name" value="Homeodomain-like_sf"/>
</dbReference>
<dbReference type="InterPro" id="IPR002197">
    <property type="entry name" value="HTH_Fis"/>
</dbReference>
<dbReference type="InterPro" id="IPR027417">
    <property type="entry name" value="P-loop_NTPase"/>
</dbReference>
<dbReference type="InterPro" id="IPR001789">
    <property type="entry name" value="Sig_transdc_resp-reg_receiver"/>
</dbReference>
<dbReference type="InterPro" id="IPR002078">
    <property type="entry name" value="Sigma_54_int"/>
</dbReference>
<dbReference type="InterPro" id="IPR025662">
    <property type="entry name" value="Sigma_54_int_dom_ATP-bd_1"/>
</dbReference>
<dbReference type="InterPro" id="IPR025943">
    <property type="entry name" value="Sigma_54_int_dom_ATP-bd_2"/>
</dbReference>
<dbReference type="InterPro" id="IPR025944">
    <property type="entry name" value="Sigma_54_int_dom_CS"/>
</dbReference>
<dbReference type="PANTHER" id="PTHR32071:SF100">
    <property type="entry name" value="RESPONSE REGULATOR PROTEIN PILR"/>
    <property type="match status" value="1"/>
</dbReference>
<dbReference type="PANTHER" id="PTHR32071">
    <property type="entry name" value="TRANSCRIPTIONAL REGULATORY PROTEIN"/>
    <property type="match status" value="1"/>
</dbReference>
<dbReference type="Pfam" id="PF02954">
    <property type="entry name" value="HTH_8"/>
    <property type="match status" value="1"/>
</dbReference>
<dbReference type="Pfam" id="PF00072">
    <property type="entry name" value="Response_reg"/>
    <property type="match status" value="1"/>
</dbReference>
<dbReference type="Pfam" id="PF00158">
    <property type="entry name" value="Sigma54_activat"/>
    <property type="match status" value="1"/>
</dbReference>
<dbReference type="PRINTS" id="PR01590">
    <property type="entry name" value="HTHFIS"/>
</dbReference>
<dbReference type="SMART" id="SM00382">
    <property type="entry name" value="AAA"/>
    <property type="match status" value="1"/>
</dbReference>
<dbReference type="SMART" id="SM00448">
    <property type="entry name" value="REC"/>
    <property type="match status" value="1"/>
</dbReference>
<dbReference type="SUPFAM" id="SSF52172">
    <property type="entry name" value="CheY-like"/>
    <property type="match status" value="1"/>
</dbReference>
<dbReference type="SUPFAM" id="SSF46689">
    <property type="entry name" value="Homeodomain-like"/>
    <property type="match status" value="1"/>
</dbReference>
<dbReference type="SUPFAM" id="SSF52540">
    <property type="entry name" value="P-loop containing nucleoside triphosphate hydrolases"/>
    <property type="match status" value="1"/>
</dbReference>
<dbReference type="PROSITE" id="PS50110">
    <property type="entry name" value="RESPONSE_REGULATORY"/>
    <property type="match status" value="1"/>
</dbReference>
<dbReference type="PROSITE" id="PS00675">
    <property type="entry name" value="SIGMA54_INTERACT_1"/>
    <property type="match status" value="1"/>
</dbReference>
<dbReference type="PROSITE" id="PS00676">
    <property type="entry name" value="SIGMA54_INTERACT_2"/>
    <property type="match status" value="1"/>
</dbReference>
<dbReference type="PROSITE" id="PS00688">
    <property type="entry name" value="SIGMA54_INTERACT_3"/>
    <property type="match status" value="1"/>
</dbReference>
<dbReference type="PROSITE" id="PS50045">
    <property type="entry name" value="SIGMA54_INTERACT_4"/>
    <property type="match status" value="1"/>
</dbReference>
<sequence length="445" mass="49737">MSRQKALIVDDEPDIRELLEITLGRMKLDTRSARNVKEARELLAREPFDLCLTDMRLPDGSGLDLVQYIQQRHPQTPVAMITAYGSLDTAIQALKAGAFDFLTKPVDLGRLRELVATALRLRNPEAEEAPVDNRLLGESPPMRALRNQIGKLARSQAPVYISGESGSGKELVARLIHEQGPRIERPFVPVNCGAIPSELMESEFFGHKKGSFTGAIEDKQGLFQAASGGTLFLDEVADLPMAMQVKLLRAIQEKAVRAVGGQQEVAVDVRILCATHKDLAAEVGAGRFRQDLYYRLNVIELRVPPLRERREDIPLLAERILKRLAGDTGLPAARLTGDAQEKLKNYRFPGNVRELENMLERAYTLCEDDQIQPHDLRLADAPGASQEGAASLSEIDNLEDYLEDIERKLIMQALEETRWNRTAAAQRLGLTFRSMRYRLKKLGID</sequence>
<accession>Q00934</accession>
<accession>Q9HVN2</accession>
<proteinExistence type="evidence at protein level"/>
<name>PILR_PSEAE</name>